<dbReference type="EC" id="2.5.1.55"/>
<dbReference type="EMBL" id="AF053723">
    <property type="protein sequence ID" value="AAC26633.1"/>
    <property type="molecule type" value="Genomic_DNA"/>
</dbReference>
<dbReference type="SMR" id="O68662"/>
<dbReference type="BRENDA" id="2.5.1.55">
    <property type="organism ID" value="123"/>
</dbReference>
<dbReference type="UniPathway" id="UPA00030"/>
<dbReference type="UniPathway" id="UPA00357">
    <property type="reaction ID" value="UER00474"/>
</dbReference>
<dbReference type="GO" id="GO:0005737">
    <property type="term" value="C:cytoplasm"/>
    <property type="evidence" value="ECO:0007669"/>
    <property type="project" value="UniProtKB-SubCell"/>
</dbReference>
<dbReference type="GO" id="GO:0008676">
    <property type="term" value="F:3-deoxy-8-phosphooctulonate synthase activity"/>
    <property type="evidence" value="ECO:0007669"/>
    <property type="project" value="UniProtKB-UniRule"/>
</dbReference>
<dbReference type="GO" id="GO:0019294">
    <property type="term" value="P:keto-3-deoxy-D-manno-octulosonic acid biosynthetic process"/>
    <property type="evidence" value="ECO:0007669"/>
    <property type="project" value="UniProtKB-UniRule"/>
</dbReference>
<dbReference type="FunFam" id="3.20.20.70:FF:000058">
    <property type="entry name" value="2-dehydro-3-deoxyphosphooctonate aldolase"/>
    <property type="match status" value="1"/>
</dbReference>
<dbReference type="Gene3D" id="3.20.20.70">
    <property type="entry name" value="Aldolase class I"/>
    <property type="match status" value="1"/>
</dbReference>
<dbReference type="HAMAP" id="MF_00056">
    <property type="entry name" value="KDO8P_synth"/>
    <property type="match status" value="1"/>
</dbReference>
<dbReference type="InterPro" id="IPR013785">
    <property type="entry name" value="Aldolase_TIM"/>
</dbReference>
<dbReference type="InterPro" id="IPR006218">
    <property type="entry name" value="DAHP1/KDSA"/>
</dbReference>
<dbReference type="InterPro" id="IPR006269">
    <property type="entry name" value="KDO8P_synthase"/>
</dbReference>
<dbReference type="NCBIfam" id="TIGR01362">
    <property type="entry name" value="KDO8P_synth"/>
    <property type="match status" value="1"/>
</dbReference>
<dbReference type="NCBIfam" id="NF003543">
    <property type="entry name" value="PRK05198.1"/>
    <property type="match status" value="1"/>
</dbReference>
<dbReference type="NCBIfam" id="NF009109">
    <property type="entry name" value="PRK12457.1"/>
    <property type="match status" value="1"/>
</dbReference>
<dbReference type="PANTHER" id="PTHR21057">
    <property type="entry name" value="PHOSPHO-2-DEHYDRO-3-DEOXYHEPTONATE ALDOLASE"/>
    <property type="match status" value="1"/>
</dbReference>
<dbReference type="Pfam" id="PF00793">
    <property type="entry name" value="DAHP_synth_1"/>
    <property type="match status" value="1"/>
</dbReference>
<dbReference type="SUPFAM" id="SSF51569">
    <property type="entry name" value="Aldolase"/>
    <property type="match status" value="1"/>
</dbReference>
<sequence length="286" mass="31343">MTILNKIVKVGNIEVANDKPFTLFGGMNVLESRDMAMRVCEQYVEVTNKLGVPYVFKASFDKANRSSIHSYRGPGMEEGLKIFQELKDTFGVSIITDVHEIYQCKPVAEVVDIIQLPAFLARQTDLVEAMARTGVVINVKKPQFLSPGQMGNIVEKIAECGNENVILCDRGTNFGYDNLVVDMLGFNIMKKVSKGCPVIFDVTHSLQCRDPFGAASGGRRDQVTELARSGMAIGLAGLFLEAHPDPNSAKCDGPSALPLSKLEAFVSQMKAIDDLVKSFEEIDTSR</sequence>
<comment type="catalytic activity">
    <reaction>
        <text>D-arabinose 5-phosphate + phosphoenolpyruvate + H2O = 3-deoxy-alpha-D-manno-2-octulosonate-8-phosphate + phosphate</text>
        <dbReference type="Rhea" id="RHEA:14053"/>
        <dbReference type="ChEBI" id="CHEBI:15377"/>
        <dbReference type="ChEBI" id="CHEBI:43474"/>
        <dbReference type="ChEBI" id="CHEBI:57693"/>
        <dbReference type="ChEBI" id="CHEBI:58702"/>
        <dbReference type="ChEBI" id="CHEBI:85985"/>
        <dbReference type="EC" id="2.5.1.55"/>
    </reaction>
</comment>
<comment type="pathway">
    <text>Carbohydrate biosynthesis; 3-deoxy-D-manno-octulosonate biosynthesis; 3-deoxy-D-manno-octulosonate from D-ribulose 5-phosphate: step 2/3.</text>
</comment>
<comment type="pathway">
    <text>Bacterial outer membrane biogenesis; lipopolysaccharide biosynthesis.</text>
</comment>
<comment type="subcellular location">
    <subcellularLocation>
        <location evidence="1">Cytoplasm</location>
    </subcellularLocation>
</comment>
<comment type="similarity">
    <text evidence="2">Belongs to the KdsA family.</text>
</comment>
<accession>O68662</accession>
<feature type="chain" id="PRO_0000187097" description="2-dehydro-3-deoxyphosphooctonate aldolase">
    <location>
        <begin position="1"/>
        <end position="286"/>
    </location>
</feature>
<gene>
    <name type="primary">kdsA</name>
    <name type="synonym">cps5D</name>
</gene>
<organism>
    <name type="scientific">Actinobacillus pleuropneumoniae</name>
    <name type="common">Haemophilus pleuropneumoniae</name>
    <dbReference type="NCBI Taxonomy" id="715"/>
    <lineage>
        <taxon>Bacteria</taxon>
        <taxon>Pseudomonadati</taxon>
        <taxon>Pseudomonadota</taxon>
        <taxon>Gammaproteobacteria</taxon>
        <taxon>Pasteurellales</taxon>
        <taxon>Pasteurellaceae</taxon>
        <taxon>Actinobacillus</taxon>
    </lineage>
</organism>
<protein>
    <recommendedName>
        <fullName>2-dehydro-3-deoxyphosphooctonate aldolase</fullName>
        <ecNumber>2.5.1.55</ecNumber>
    </recommendedName>
    <alternativeName>
        <fullName>3-deoxy-D-manno-octulosonic acid 8-phosphate synthase</fullName>
    </alternativeName>
    <alternativeName>
        <fullName>KDO-8-phosphate synthase</fullName>
        <shortName>KDO 8-P synthase</shortName>
        <shortName>KDOPS</shortName>
    </alternativeName>
    <alternativeName>
        <fullName>Phospho-2-dehydro-3-deoxyoctonate aldolase</fullName>
    </alternativeName>
</protein>
<name>KDSA_ACTPL</name>
<evidence type="ECO:0000250" key="1"/>
<evidence type="ECO:0000305" key="2"/>
<keyword id="KW-0963">Cytoplasm</keyword>
<keyword id="KW-0448">Lipopolysaccharide biosynthesis</keyword>
<keyword id="KW-0808">Transferase</keyword>
<proteinExistence type="inferred from homology"/>
<reference key="1">
    <citation type="submission" date="1998-03" db="EMBL/GenBank/DDBJ databases">
        <authorList>
            <person name="Ward C.K."/>
            <person name="Lawrence M.L."/>
            <person name="Inzana T.J."/>
        </authorList>
    </citation>
    <scope>NUCLEOTIDE SEQUENCE [GENOMIC DNA]</scope>
    <source>
        <strain>J45</strain>
    </source>
</reference>